<feature type="chain" id="PRO_0000263579" description="Small ribosomal subunit protein uS12">
    <location>
        <begin position="1"/>
        <end position="123"/>
    </location>
</feature>
<feature type="modified residue" description="3-methylthioaspartic acid" evidence="1">
    <location>
        <position position="89"/>
    </location>
</feature>
<name>RS12_RHIJ3</name>
<protein>
    <recommendedName>
        <fullName evidence="2">Small ribosomal subunit protein uS12</fullName>
    </recommendedName>
    <alternativeName>
        <fullName evidence="3">30S ribosomal protein S12</fullName>
    </alternativeName>
</protein>
<reference key="1">
    <citation type="journal article" date="2006" name="Genome Biol.">
        <title>The genome of Rhizobium leguminosarum has recognizable core and accessory components.</title>
        <authorList>
            <person name="Young J.P.W."/>
            <person name="Crossman L.C."/>
            <person name="Johnston A.W.B."/>
            <person name="Thomson N.R."/>
            <person name="Ghazoui Z.F."/>
            <person name="Hull K.H."/>
            <person name="Wexler M."/>
            <person name="Curson A.R.J."/>
            <person name="Todd J.D."/>
            <person name="Poole P.S."/>
            <person name="Mauchline T.H."/>
            <person name="East A.K."/>
            <person name="Quail M.A."/>
            <person name="Churcher C."/>
            <person name="Arrowsmith C."/>
            <person name="Cherevach I."/>
            <person name="Chillingworth T."/>
            <person name="Clarke K."/>
            <person name="Cronin A."/>
            <person name="Davis P."/>
            <person name="Fraser A."/>
            <person name="Hance Z."/>
            <person name="Hauser H."/>
            <person name="Jagels K."/>
            <person name="Moule S."/>
            <person name="Mungall K."/>
            <person name="Norbertczak H."/>
            <person name="Rabbinowitsch E."/>
            <person name="Sanders M."/>
            <person name="Simmonds M."/>
            <person name="Whitehead S."/>
            <person name="Parkhill J."/>
        </authorList>
    </citation>
    <scope>NUCLEOTIDE SEQUENCE [LARGE SCALE GENOMIC DNA]</scope>
    <source>
        <strain>DSM 114642 / LMG 32736 / 3841</strain>
    </source>
</reference>
<proteinExistence type="inferred from homology"/>
<keyword id="KW-0488">Methylation</keyword>
<keyword id="KW-0687">Ribonucleoprotein</keyword>
<keyword id="KW-0689">Ribosomal protein</keyword>
<keyword id="KW-0694">RNA-binding</keyword>
<keyword id="KW-0699">rRNA-binding</keyword>
<keyword id="KW-0820">tRNA-binding</keyword>
<comment type="function">
    <text evidence="2">With S4 and S5 plays an important role in translational accuracy.</text>
</comment>
<comment type="function">
    <text evidence="2">Interacts with and stabilizes bases of the 16S rRNA that are involved in tRNA selection in the A site and with the mRNA backbone. Located at the interface of the 30S and 50S subunits, it traverses the body of the 30S subunit contacting proteins on the other side and probably holding the rRNA structure together. The combined cluster of proteins S8, S12 and S17 appears to hold together the shoulder and platform of the 30S subunit.</text>
</comment>
<comment type="subunit">
    <text evidence="2">Part of the 30S ribosomal subunit. Contacts proteins S8 and S17. May interact with IF1 in the 30S initiation complex.</text>
</comment>
<comment type="similarity">
    <text evidence="2">Belongs to the universal ribosomal protein uS12 family.</text>
</comment>
<accession>Q1MIE6</accession>
<dbReference type="EMBL" id="AM236080">
    <property type="protein sequence ID" value="CAK07264.1"/>
    <property type="molecule type" value="Genomic_DNA"/>
</dbReference>
<dbReference type="RefSeq" id="WP_011424978.1">
    <property type="nucleotide sequence ID" value="NC_008380.1"/>
</dbReference>
<dbReference type="SMR" id="Q1MIE6"/>
<dbReference type="EnsemblBacteria" id="CAK07264">
    <property type="protein sequence ID" value="CAK07264"/>
    <property type="gene ID" value="RL1769"/>
</dbReference>
<dbReference type="KEGG" id="rle:RL1769"/>
<dbReference type="eggNOG" id="COG0048">
    <property type="taxonomic scope" value="Bacteria"/>
</dbReference>
<dbReference type="HOGENOM" id="CLU_104295_1_2_5"/>
<dbReference type="Proteomes" id="UP000006575">
    <property type="component" value="Chromosome"/>
</dbReference>
<dbReference type="GO" id="GO:0015935">
    <property type="term" value="C:small ribosomal subunit"/>
    <property type="evidence" value="ECO:0007669"/>
    <property type="project" value="InterPro"/>
</dbReference>
<dbReference type="GO" id="GO:0019843">
    <property type="term" value="F:rRNA binding"/>
    <property type="evidence" value="ECO:0007669"/>
    <property type="project" value="UniProtKB-UniRule"/>
</dbReference>
<dbReference type="GO" id="GO:0003735">
    <property type="term" value="F:structural constituent of ribosome"/>
    <property type="evidence" value="ECO:0007669"/>
    <property type="project" value="InterPro"/>
</dbReference>
<dbReference type="GO" id="GO:0000049">
    <property type="term" value="F:tRNA binding"/>
    <property type="evidence" value="ECO:0007669"/>
    <property type="project" value="UniProtKB-UniRule"/>
</dbReference>
<dbReference type="GO" id="GO:0006412">
    <property type="term" value="P:translation"/>
    <property type="evidence" value="ECO:0007669"/>
    <property type="project" value="UniProtKB-UniRule"/>
</dbReference>
<dbReference type="CDD" id="cd03368">
    <property type="entry name" value="Ribosomal_S12"/>
    <property type="match status" value="1"/>
</dbReference>
<dbReference type="FunFam" id="2.40.50.140:FF:000001">
    <property type="entry name" value="30S ribosomal protein S12"/>
    <property type="match status" value="1"/>
</dbReference>
<dbReference type="Gene3D" id="2.40.50.140">
    <property type="entry name" value="Nucleic acid-binding proteins"/>
    <property type="match status" value="1"/>
</dbReference>
<dbReference type="HAMAP" id="MF_00403_B">
    <property type="entry name" value="Ribosomal_uS12_B"/>
    <property type="match status" value="1"/>
</dbReference>
<dbReference type="InterPro" id="IPR012340">
    <property type="entry name" value="NA-bd_OB-fold"/>
</dbReference>
<dbReference type="InterPro" id="IPR006032">
    <property type="entry name" value="Ribosomal_uS12"/>
</dbReference>
<dbReference type="InterPro" id="IPR005679">
    <property type="entry name" value="Ribosomal_uS12_bac"/>
</dbReference>
<dbReference type="NCBIfam" id="TIGR00981">
    <property type="entry name" value="rpsL_bact"/>
    <property type="match status" value="1"/>
</dbReference>
<dbReference type="PANTHER" id="PTHR11652">
    <property type="entry name" value="30S RIBOSOMAL PROTEIN S12 FAMILY MEMBER"/>
    <property type="match status" value="1"/>
</dbReference>
<dbReference type="Pfam" id="PF00164">
    <property type="entry name" value="Ribosom_S12_S23"/>
    <property type="match status" value="1"/>
</dbReference>
<dbReference type="PIRSF" id="PIRSF002133">
    <property type="entry name" value="Ribosomal_S12/S23"/>
    <property type="match status" value="1"/>
</dbReference>
<dbReference type="PRINTS" id="PR01034">
    <property type="entry name" value="RIBOSOMALS12"/>
</dbReference>
<dbReference type="SUPFAM" id="SSF50249">
    <property type="entry name" value="Nucleic acid-binding proteins"/>
    <property type="match status" value="1"/>
</dbReference>
<dbReference type="PROSITE" id="PS00055">
    <property type="entry name" value="RIBOSOMAL_S12"/>
    <property type="match status" value="1"/>
</dbReference>
<organism>
    <name type="scientific">Rhizobium johnstonii (strain DSM 114642 / LMG 32736 / 3841)</name>
    <name type="common">Rhizobium leguminosarum bv. viciae</name>
    <dbReference type="NCBI Taxonomy" id="216596"/>
    <lineage>
        <taxon>Bacteria</taxon>
        <taxon>Pseudomonadati</taxon>
        <taxon>Pseudomonadota</taxon>
        <taxon>Alphaproteobacteria</taxon>
        <taxon>Hyphomicrobiales</taxon>
        <taxon>Rhizobiaceae</taxon>
        <taxon>Rhizobium/Agrobacterium group</taxon>
        <taxon>Rhizobium</taxon>
        <taxon>Rhizobium johnstonii</taxon>
    </lineage>
</organism>
<sequence length="123" mass="14015">MPTVNQLIRKPRQANVKRNKVPALQENPQKRGVCTRVYTTTPRKPNSALRKVAKIRLTNGFEVIGYIPGEGHNLQEHSVVMIRGGRVKDLPGVRYHIIRGVLDTQGVKNRKQRRSKYGAKRPK</sequence>
<evidence type="ECO:0000250" key="1"/>
<evidence type="ECO:0000255" key="2">
    <source>
        <dbReference type="HAMAP-Rule" id="MF_00403"/>
    </source>
</evidence>
<evidence type="ECO:0000305" key="3"/>
<gene>
    <name evidence="2" type="primary">rpsL</name>
    <name type="ordered locus">RL1769</name>
</gene>